<dbReference type="EC" id="6.3.1.21" evidence="1"/>
<dbReference type="EMBL" id="CP000880">
    <property type="protein sequence ID" value="ABX20971.1"/>
    <property type="molecule type" value="Genomic_DNA"/>
</dbReference>
<dbReference type="SMR" id="A9MNE8"/>
<dbReference type="STRING" id="41514.SARI_01063"/>
<dbReference type="KEGG" id="ses:SARI_01063"/>
<dbReference type="HOGENOM" id="CLU_011534_1_3_6"/>
<dbReference type="UniPathway" id="UPA00074">
    <property type="reaction ID" value="UER00127"/>
</dbReference>
<dbReference type="Proteomes" id="UP000002084">
    <property type="component" value="Chromosome"/>
</dbReference>
<dbReference type="GO" id="GO:0005829">
    <property type="term" value="C:cytosol"/>
    <property type="evidence" value="ECO:0007669"/>
    <property type="project" value="TreeGrafter"/>
</dbReference>
<dbReference type="GO" id="GO:0005524">
    <property type="term" value="F:ATP binding"/>
    <property type="evidence" value="ECO:0007669"/>
    <property type="project" value="UniProtKB-UniRule"/>
</dbReference>
<dbReference type="GO" id="GO:0000287">
    <property type="term" value="F:magnesium ion binding"/>
    <property type="evidence" value="ECO:0007669"/>
    <property type="project" value="InterPro"/>
</dbReference>
<dbReference type="GO" id="GO:0043815">
    <property type="term" value="F:phosphoribosylglycinamide formyltransferase 2 activity"/>
    <property type="evidence" value="ECO:0007669"/>
    <property type="project" value="UniProtKB-UniRule"/>
</dbReference>
<dbReference type="GO" id="GO:0004644">
    <property type="term" value="F:phosphoribosylglycinamide formyltransferase activity"/>
    <property type="evidence" value="ECO:0007669"/>
    <property type="project" value="InterPro"/>
</dbReference>
<dbReference type="GO" id="GO:0006189">
    <property type="term" value="P:'de novo' IMP biosynthetic process"/>
    <property type="evidence" value="ECO:0007669"/>
    <property type="project" value="UniProtKB-UniRule"/>
</dbReference>
<dbReference type="FunFam" id="3.30.1490.20:FF:000013">
    <property type="entry name" value="Formate-dependent phosphoribosylglycinamide formyltransferase"/>
    <property type="match status" value="1"/>
</dbReference>
<dbReference type="FunFam" id="3.30.470.20:FF:000027">
    <property type="entry name" value="Formate-dependent phosphoribosylglycinamide formyltransferase"/>
    <property type="match status" value="1"/>
</dbReference>
<dbReference type="FunFam" id="3.40.50.20:FF:000007">
    <property type="entry name" value="Formate-dependent phosphoribosylglycinamide formyltransferase"/>
    <property type="match status" value="1"/>
</dbReference>
<dbReference type="Gene3D" id="3.40.50.20">
    <property type="match status" value="1"/>
</dbReference>
<dbReference type="Gene3D" id="3.30.1490.20">
    <property type="entry name" value="ATP-grasp fold, A domain"/>
    <property type="match status" value="1"/>
</dbReference>
<dbReference type="Gene3D" id="3.30.470.20">
    <property type="entry name" value="ATP-grasp fold, B domain"/>
    <property type="match status" value="1"/>
</dbReference>
<dbReference type="HAMAP" id="MF_01643">
    <property type="entry name" value="PurT"/>
    <property type="match status" value="1"/>
</dbReference>
<dbReference type="InterPro" id="IPR011761">
    <property type="entry name" value="ATP-grasp"/>
</dbReference>
<dbReference type="InterPro" id="IPR003135">
    <property type="entry name" value="ATP-grasp_carboxylate-amine"/>
</dbReference>
<dbReference type="InterPro" id="IPR013815">
    <property type="entry name" value="ATP_grasp_subdomain_1"/>
</dbReference>
<dbReference type="InterPro" id="IPR016185">
    <property type="entry name" value="PreATP-grasp_dom_sf"/>
</dbReference>
<dbReference type="InterPro" id="IPR005862">
    <property type="entry name" value="PurT"/>
</dbReference>
<dbReference type="InterPro" id="IPR054350">
    <property type="entry name" value="PurT/PurK_preATP-grasp"/>
</dbReference>
<dbReference type="InterPro" id="IPR048740">
    <property type="entry name" value="PurT_C"/>
</dbReference>
<dbReference type="InterPro" id="IPR011054">
    <property type="entry name" value="Rudment_hybrid_motif"/>
</dbReference>
<dbReference type="NCBIfam" id="NF006766">
    <property type="entry name" value="PRK09288.1"/>
    <property type="match status" value="1"/>
</dbReference>
<dbReference type="NCBIfam" id="TIGR01142">
    <property type="entry name" value="purT"/>
    <property type="match status" value="1"/>
</dbReference>
<dbReference type="PANTHER" id="PTHR43055">
    <property type="entry name" value="FORMATE-DEPENDENT PHOSPHORIBOSYLGLYCINAMIDE FORMYLTRANSFERASE"/>
    <property type="match status" value="1"/>
</dbReference>
<dbReference type="PANTHER" id="PTHR43055:SF1">
    <property type="entry name" value="FORMATE-DEPENDENT PHOSPHORIBOSYLGLYCINAMIDE FORMYLTRANSFERASE"/>
    <property type="match status" value="1"/>
</dbReference>
<dbReference type="Pfam" id="PF02222">
    <property type="entry name" value="ATP-grasp"/>
    <property type="match status" value="1"/>
</dbReference>
<dbReference type="Pfam" id="PF21244">
    <property type="entry name" value="PurT_C"/>
    <property type="match status" value="1"/>
</dbReference>
<dbReference type="Pfam" id="PF22660">
    <property type="entry name" value="RS_preATP-grasp-like"/>
    <property type="match status" value="1"/>
</dbReference>
<dbReference type="SUPFAM" id="SSF56059">
    <property type="entry name" value="Glutathione synthetase ATP-binding domain-like"/>
    <property type="match status" value="1"/>
</dbReference>
<dbReference type="SUPFAM" id="SSF52440">
    <property type="entry name" value="PreATP-grasp domain"/>
    <property type="match status" value="1"/>
</dbReference>
<dbReference type="SUPFAM" id="SSF51246">
    <property type="entry name" value="Rudiment single hybrid motif"/>
    <property type="match status" value="1"/>
</dbReference>
<dbReference type="PROSITE" id="PS50975">
    <property type="entry name" value="ATP_GRASP"/>
    <property type="match status" value="1"/>
</dbReference>
<gene>
    <name evidence="1" type="primary">purT</name>
    <name type="ordered locus">SARI_01063</name>
</gene>
<keyword id="KW-0067">ATP-binding</keyword>
<keyword id="KW-0436">Ligase</keyword>
<keyword id="KW-0460">Magnesium</keyword>
<keyword id="KW-0479">Metal-binding</keyword>
<keyword id="KW-0547">Nucleotide-binding</keyword>
<keyword id="KW-0658">Purine biosynthesis</keyword>
<keyword id="KW-1185">Reference proteome</keyword>
<sequence>MTLLGTALRPAATRVMLLGSGELGKEVAIECQRLGIEVIAVDRYPDAPAMHVAHRSHVINMLDGEALRHVIAVEKPHYIVPEIEAIATDTLRDLEDEGLNVVPCARATQLTMNREGIRRLAAEELGLPTSTYRFADSEASFRDAVAAVGFPCIVKPVMSSSGKGQSFIRSPEQLAQAWKYAQQGGRAGAGRVIVEGVVKFDFEITLLTVSAVDGVYFCAPVGHRQQDGDYRESWQPQQMSELALKRAQEIARHVVLALGGHGLFGVELFVCGDEVIFSEVSPRPHDTGMVTLISQDLSEFALHVRAFLGLPVGAIRQYGPAASAVILPQLTSRNVTFDNVQAAVGAGLQVRFFGKPEIDGARRLGVALATGENVEEAVIRAKKAVSSVIVKE</sequence>
<feature type="chain" id="PRO_1000186890" description="Formate-dependent phosphoribosylglycinamide formyltransferase">
    <location>
        <begin position="1"/>
        <end position="392"/>
    </location>
</feature>
<feature type="domain" description="ATP-grasp" evidence="1">
    <location>
        <begin position="119"/>
        <end position="308"/>
    </location>
</feature>
<feature type="binding site" evidence="1">
    <location>
        <begin position="22"/>
        <end position="23"/>
    </location>
    <ligand>
        <name>N(1)-(5-phospho-beta-D-ribosyl)glycinamide</name>
        <dbReference type="ChEBI" id="CHEBI:143788"/>
    </ligand>
</feature>
<feature type="binding site" evidence="1">
    <location>
        <position position="82"/>
    </location>
    <ligand>
        <name>N(1)-(5-phospho-beta-D-ribosyl)glycinamide</name>
        <dbReference type="ChEBI" id="CHEBI:143788"/>
    </ligand>
</feature>
<feature type="binding site" evidence="1">
    <location>
        <position position="114"/>
    </location>
    <ligand>
        <name>ATP</name>
        <dbReference type="ChEBI" id="CHEBI:30616"/>
    </ligand>
</feature>
<feature type="binding site" evidence="1">
    <location>
        <position position="155"/>
    </location>
    <ligand>
        <name>ATP</name>
        <dbReference type="ChEBI" id="CHEBI:30616"/>
    </ligand>
</feature>
<feature type="binding site" evidence="1">
    <location>
        <begin position="160"/>
        <end position="165"/>
    </location>
    <ligand>
        <name>ATP</name>
        <dbReference type="ChEBI" id="CHEBI:30616"/>
    </ligand>
</feature>
<feature type="binding site" evidence="1">
    <location>
        <begin position="195"/>
        <end position="198"/>
    </location>
    <ligand>
        <name>ATP</name>
        <dbReference type="ChEBI" id="CHEBI:30616"/>
    </ligand>
</feature>
<feature type="binding site" evidence="1">
    <location>
        <position position="203"/>
    </location>
    <ligand>
        <name>ATP</name>
        <dbReference type="ChEBI" id="CHEBI:30616"/>
    </ligand>
</feature>
<feature type="binding site" evidence="1">
    <location>
        <position position="267"/>
    </location>
    <ligand>
        <name>Mg(2+)</name>
        <dbReference type="ChEBI" id="CHEBI:18420"/>
    </ligand>
</feature>
<feature type="binding site" evidence="1">
    <location>
        <position position="279"/>
    </location>
    <ligand>
        <name>Mg(2+)</name>
        <dbReference type="ChEBI" id="CHEBI:18420"/>
    </ligand>
</feature>
<feature type="binding site" evidence="1">
    <location>
        <position position="286"/>
    </location>
    <ligand>
        <name>N(1)-(5-phospho-beta-D-ribosyl)glycinamide</name>
        <dbReference type="ChEBI" id="CHEBI:143788"/>
    </ligand>
</feature>
<feature type="binding site" evidence="1">
    <location>
        <position position="355"/>
    </location>
    <ligand>
        <name>N(1)-(5-phospho-beta-D-ribosyl)glycinamide</name>
        <dbReference type="ChEBI" id="CHEBI:143788"/>
    </ligand>
</feature>
<feature type="binding site" evidence="1">
    <location>
        <begin position="362"/>
        <end position="363"/>
    </location>
    <ligand>
        <name>N(1)-(5-phospho-beta-D-ribosyl)glycinamide</name>
        <dbReference type="ChEBI" id="CHEBI:143788"/>
    </ligand>
</feature>
<accession>A9MNE8</accession>
<proteinExistence type="inferred from homology"/>
<comment type="function">
    <text evidence="1">Involved in the de novo purine biosynthesis. Catalyzes the transfer of formate to 5-phospho-ribosyl-glycinamide (GAR), producing 5-phospho-ribosyl-N-formylglycinamide (FGAR). Formate is provided by PurU via hydrolysis of 10-formyl-tetrahydrofolate.</text>
</comment>
<comment type="catalytic activity">
    <reaction evidence="1">
        <text>N(1)-(5-phospho-beta-D-ribosyl)glycinamide + formate + ATP = N(2)-formyl-N(1)-(5-phospho-beta-D-ribosyl)glycinamide + ADP + phosphate + H(+)</text>
        <dbReference type="Rhea" id="RHEA:24829"/>
        <dbReference type="ChEBI" id="CHEBI:15378"/>
        <dbReference type="ChEBI" id="CHEBI:15740"/>
        <dbReference type="ChEBI" id="CHEBI:30616"/>
        <dbReference type="ChEBI" id="CHEBI:43474"/>
        <dbReference type="ChEBI" id="CHEBI:143788"/>
        <dbReference type="ChEBI" id="CHEBI:147286"/>
        <dbReference type="ChEBI" id="CHEBI:456216"/>
        <dbReference type="EC" id="6.3.1.21"/>
    </reaction>
    <physiologicalReaction direction="left-to-right" evidence="1">
        <dbReference type="Rhea" id="RHEA:24830"/>
    </physiologicalReaction>
</comment>
<comment type="pathway">
    <text evidence="1">Purine metabolism; IMP biosynthesis via de novo pathway; N(2)-formyl-N(1)-(5-phospho-D-ribosyl)glycinamide from N(1)-(5-phospho-D-ribosyl)glycinamide (formate route): step 1/1.</text>
</comment>
<comment type="subunit">
    <text evidence="1">Homodimer.</text>
</comment>
<comment type="similarity">
    <text evidence="1">Belongs to the PurK/PurT family.</text>
</comment>
<name>PURT_SALAR</name>
<protein>
    <recommendedName>
        <fullName evidence="1">Formate-dependent phosphoribosylglycinamide formyltransferase</fullName>
        <ecNumber evidence="1">6.3.1.21</ecNumber>
    </recommendedName>
    <alternativeName>
        <fullName evidence="1">5'-phosphoribosylglycinamide transformylase 2</fullName>
    </alternativeName>
    <alternativeName>
        <fullName evidence="1">Formate-dependent GAR transformylase</fullName>
    </alternativeName>
    <alternativeName>
        <fullName evidence="1">GAR transformylase 2</fullName>
        <shortName evidence="1">GART 2</shortName>
    </alternativeName>
    <alternativeName>
        <fullName evidence="1">Non-folate glycinamide ribonucleotide transformylase</fullName>
    </alternativeName>
    <alternativeName>
        <fullName evidence="1">Phosphoribosylglycinamide formyltransferase 2</fullName>
    </alternativeName>
</protein>
<reference key="1">
    <citation type="submission" date="2007-11" db="EMBL/GenBank/DDBJ databases">
        <authorList>
            <consortium name="The Salmonella enterica serovar Arizonae Genome Sequencing Project"/>
            <person name="McClelland M."/>
            <person name="Sanderson E.K."/>
            <person name="Porwollik S."/>
            <person name="Spieth J."/>
            <person name="Clifton W.S."/>
            <person name="Fulton R."/>
            <person name="Chunyan W."/>
            <person name="Wollam A."/>
            <person name="Shah N."/>
            <person name="Pepin K."/>
            <person name="Bhonagiri V."/>
            <person name="Nash W."/>
            <person name="Johnson M."/>
            <person name="Thiruvilangam P."/>
            <person name="Wilson R."/>
        </authorList>
    </citation>
    <scope>NUCLEOTIDE SEQUENCE [LARGE SCALE GENOMIC DNA]</scope>
    <source>
        <strain>ATCC BAA-731 / CDC346-86 / RSK2980</strain>
    </source>
</reference>
<evidence type="ECO:0000255" key="1">
    <source>
        <dbReference type="HAMAP-Rule" id="MF_01643"/>
    </source>
</evidence>
<organism>
    <name type="scientific">Salmonella arizonae (strain ATCC BAA-731 / CDC346-86 / RSK2980)</name>
    <dbReference type="NCBI Taxonomy" id="41514"/>
    <lineage>
        <taxon>Bacteria</taxon>
        <taxon>Pseudomonadati</taxon>
        <taxon>Pseudomonadota</taxon>
        <taxon>Gammaproteobacteria</taxon>
        <taxon>Enterobacterales</taxon>
        <taxon>Enterobacteriaceae</taxon>
        <taxon>Salmonella</taxon>
    </lineage>
</organism>